<keyword id="KW-0021">Allosteric enzyme</keyword>
<keyword id="KW-0067">ATP-binding</keyword>
<keyword id="KW-0963">Cytoplasm</keyword>
<keyword id="KW-0324">Glycolysis</keyword>
<keyword id="KW-0418">Kinase</keyword>
<keyword id="KW-0460">Magnesium</keyword>
<keyword id="KW-0479">Metal-binding</keyword>
<keyword id="KW-0547">Nucleotide-binding</keyword>
<keyword id="KW-1185">Reference proteome</keyword>
<keyword id="KW-0808">Transferase</keyword>
<reference key="1">
    <citation type="journal article" date="2006" name="Nat. Genet.">
        <title>The multidrug-resistant human pathogen Clostridium difficile has a highly mobile, mosaic genome.</title>
        <authorList>
            <person name="Sebaihia M."/>
            <person name="Wren B.W."/>
            <person name="Mullany P."/>
            <person name="Fairweather N.F."/>
            <person name="Minton N."/>
            <person name="Stabler R."/>
            <person name="Thomson N.R."/>
            <person name="Roberts A.P."/>
            <person name="Cerdeno-Tarraga A.M."/>
            <person name="Wang H."/>
            <person name="Holden M.T.G."/>
            <person name="Wright A."/>
            <person name="Churcher C."/>
            <person name="Quail M.A."/>
            <person name="Baker S."/>
            <person name="Bason N."/>
            <person name="Brooks K."/>
            <person name="Chillingworth T."/>
            <person name="Cronin A."/>
            <person name="Davis P."/>
            <person name="Dowd L."/>
            <person name="Fraser A."/>
            <person name="Feltwell T."/>
            <person name="Hance Z."/>
            <person name="Holroyd S."/>
            <person name="Jagels K."/>
            <person name="Moule S."/>
            <person name="Mungall K."/>
            <person name="Price C."/>
            <person name="Rabbinowitsch E."/>
            <person name="Sharp S."/>
            <person name="Simmonds M."/>
            <person name="Stevens K."/>
            <person name="Unwin L."/>
            <person name="Whithead S."/>
            <person name="Dupuy B."/>
            <person name="Dougan G."/>
            <person name="Barrell B."/>
            <person name="Parkhill J."/>
        </authorList>
    </citation>
    <scope>NUCLEOTIDE SEQUENCE [LARGE SCALE GENOMIC DNA]</scope>
    <source>
        <strain>630</strain>
    </source>
</reference>
<protein>
    <recommendedName>
        <fullName evidence="1">ATP-dependent 6-phosphofructokinase</fullName>
        <shortName evidence="1">ATP-PFK</shortName>
        <shortName evidence="1">Phosphofructokinase</shortName>
        <ecNumber evidence="1">2.7.1.11</ecNumber>
    </recommendedName>
    <alternativeName>
        <fullName evidence="1">Phosphohexokinase</fullName>
    </alternativeName>
</protein>
<name>PFKA_CLOD6</name>
<accession>Q180P4</accession>
<feature type="chain" id="PRO_1000059754" description="ATP-dependent 6-phosphofructokinase">
    <location>
        <begin position="1"/>
        <end position="319"/>
    </location>
</feature>
<feature type="active site" description="Proton acceptor" evidence="1">
    <location>
        <position position="127"/>
    </location>
</feature>
<feature type="binding site" evidence="1">
    <location>
        <position position="11"/>
    </location>
    <ligand>
        <name>ATP</name>
        <dbReference type="ChEBI" id="CHEBI:30616"/>
    </ligand>
</feature>
<feature type="binding site" evidence="1">
    <location>
        <begin position="21"/>
        <end position="25"/>
    </location>
    <ligand>
        <name>ADP</name>
        <dbReference type="ChEBI" id="CHEBI:456216"/>
        <note>allosteric activator; ligand shared between dimeric partners</note>
    </ligand>
</feature>
<feature type="binding site" evidence="1">
    <location>
        <begin position="72"/>
        <end position="73"/>
    </location>
    <ligand>
        <name>ATP</name>
        <dbReference type="ChEBI" id="CHEBI:30616"/>
    </ligand>
</feature>
<feature type="binding site" evidence="1">
    <location>
        <begin position="102"/>
        <end position="105"/>
    </location>
    <ligand>
        <name>ATP</name>
        <dbReference type="ChEBI" id="CHEBI:30616"/>
    </ligand>
</feature>
<feature type="binding site" evidence="1">
    <location>
        <position position="103"/>
    </location>
    <ligand>
        <name>Mg(2+)</name>
        <dbReference type="ChEBI" id="CHEBI:18420"/>
        <note>catalytic</note>
    </ligand>
</feature>
<feature type="binding site" description="in other chain" evidence="1">
    <location>
        <begin position="125"/>
        <end position="127"/>
    </location>
    <ligand>
        <name>substrate</name>
        <note>ligand shared between dimeric partners</note>
    </ligand>
</feature>
<feature type="binding site" description="in other chain" evidence="1">
    <location>
        <position position="154"/>
    </location>
    <ligand>
        <name>ADP</name>
        <dbReference type="ChEBI" id="CHEBI:456216"/>
        <note>allosteric activator; ligand shared between dimeric partners</note>
    </ligand>
</feature>
<feature type="binding site" evidence="1">
    <location>
        <position position="162"/>
    </location>
    <ligand>
        <name>substrate</name>
        <note>ligand shared between dimeric partners</note>
    </ligand>
</feature>
<feature type="binding site" description="in other chain" evidence="1">
    <location>
        <begin position="169"/>
        <end position="171"/>
    </location>
    <ligand>
        <name>substrate</name>
        <note>ligand shared between dimeric partners</note>
    </ligand>
</feature>
<feature type="binding site" description="in other chain" evidence="1">
    <location>
        <begin position="185"/>
        <end position="187"/>
    </location>
    <ligand>
        <name>ADP</name>
        <dbReference type="ChEBI" id="CHEBI:456216"/>
        <note>allosteric activator; ligand shared between dimeric partners</note>
    </ligand>
</feature>
<feature type="binding site" description="in other chain" evidence="1">
    <location>
        <position position="211"/>
    </location>
    <ligand>
        <name>ADP</name>
        <dbReference type="ChEBI" id="CHEBI:456216"/>
        <note>allosteric activator; ligand shared between dimeric partners</note>
    </ligand>
</feature>
<feature type="binding site" description="in other chain" evidence="1">
    <location>
        <begin position="213"/>
        <end position="215"/>
    </location>
    <ligand>
        <name>ADP</name>
        <dbReference type="ChEBI" id="CHEBI:456216"/>
        <note>allosteric activator; ligand shared between dimeric partners</note>
    </ligand>
</feature>
<feature type="binding site" description="in other chain" evidence="1">
    <location>
        <position position="222"/>
    </location>
    <ligand>
        <name>substrate</name>
        <note>ligand shared between dimeric partners</note>
    </ligand>
</feature>
<feature type="binding site" evidence="1">
    <location>
        <position position="243"/>
    </location>
    <ligand>
        <name>substrate</name>
        <note>ligand shared between dimeric partners</note>
    </ligand>
</feature>
<feature type="binding site" description="in other chain" evidence="1">
    <location>
        <begin position="249"/>
        <end position="252"/>
    </location>
    <ligand>
        <name>substrate</name>
        <note>ligand shared between dimeric partners</note>
    </ligand>
</feature>
<sequence>MKTIGLLTSGGDAPGMNAAIRAVVRSAIYYGCKVYGINRGYKGLLEEDLTEMNLSSVGDIIHRGGTILKSSRCEEFKTEEGRLKAVKILKKYKIDCLVVIGGDGSFAGAQKLSDLGFPAIGIPGTIDNDLAYTDYTIGFDTAMNTIIDAIGKIRDTSSSHERVNIVEVMGRHCGDLALYAGLAGGAETIIVPEVEITVDEVALRLKTTQKRGKRHSIIVLAEGVGSASDLEKELKKESGADLRVTVLGHVQRGGSPTVSDRILASRLGVRAVELLLDGKSARVVGIKENKIIDLEISEALAQKKVFDKEAYEMAKILSI</sequence>
<gene>
    <name evidence="1" type="primary">pfkA</name>
    <name type="ordered locus">CD630_33950</name>
</gene>
<dbReference type="EC" id="2.7.1.11" evidence="1"/>
<dbReference type="EMBL" id="AM180355">
    <property type="protein sequence ID" value="CAJ70298.1"/>
    <property type="molecule type" value="Genomic_DNA"/>
</dbReference>
<dbReference type="RefSeq" id="WP_003429132.1">
    <property type="nucleotide sequence ID" value="NZ_JAUPES010000002.1"/>
</dbReference>
<dbReference type="RefSeq" id="YP_001089915.1">
    <property type="nucleotide sequence ID" value="NC_009089.1"/>
</dbReference>
<dbReference type="SMR" id="Q180P4"/>
<dbReference type="STRING" id="272563.CD630_33950"/>
<dbReference type="EnsemblBacteria" id="CAJ70298">
    <property type="protein sequence ID" value="CAJ70298"/>
    <property type="gene ID" value="CD630_33950"/>
</dbReference>
<dbReference type="GeneID" id="66355852"/>
<dbReference type="KEGG" id="cdf:CD630_33950"/>
<dbReference type="KEGG" id="pdc:CDIF630_03700"/>
<dbReference type="PATRIC" id="fig|272563.120.peg.3589"/>
<dbReference type="eggNOG" id="COG0205">
    <property type="taxonomic scope" value="Bacteria"/>
</dbReference>
<dbReference type="OrthoDB" id="9802503at2"/>
<dbReference type="PhylomeDB" id="Q180P4"/>
<dbReference type="BioCyc" id="PDIF272563:G12WB-3569-MONOMER"/>
<dbReference type="UniPathway" id="UPA00109">
    <property type="reaction ID" value="UER00182"/>
</dbReference>
<dbReference type="Proteomes" id="UP000001978">
    <property type="component" value="Chromosome"/>
</dbReference>
<dbReference type="GO" id="GO:0005945">
    <property type="term" value="C:6-phosphofructokinase complex"/>
    <property type="evidence" value="ECO:0007669"/>
    <property type="project" value="TreeGrafter"/>
</dbReference>
<dbReference type="GO" id="GO:0003872">
    <property type="term" value="F:6-phosphofructokinase activity"/>
    <property type="evidence" value="ECO:0007669"/>
    <property type="project" value="UniProtKB-UniRule"/>
</dbReference>
<dbReference type="GO" id="GO:0016208">
    <property type="term" value="F:AMP binding"/>
    <property type="evidence" value="ECO:0007669"/>
    <property type="project" value="TreeGrafter"/>
</dbReference>
<dbReference type="GO" id="GO:0005524">
    <property type="term" value="F:ATP binding"/>
    <property type="evidence" value="ECO:0007669"/>
    <property type="project" value="UniProtKB-KW"/>
</dbReference>
<dbReference type="GO" id="GO:0070095">
    <property type="term" value="F:fructose-6-phosphate binding"/>
    <property type="evidence" value="ECO:0007669"/>
    <property type="project" value="TreeGrafter"/>
</dbReference>
<dbReference type="GO" id="GO:0042802">
    <property type="term" value="F:identical protein binding"/>
    <property type="evidence" value="ECO:0007669"/>
    <property type="project" value="TreeGrafter"/>
</dbReference>
<dbReference type="GO" id="GO:0046872">
    <property type="term" value="F:metal ion binding"/>
    <property type="evidence" value="ECO:0007669"/>
    <property type="project" value="UniProtKB-KW"/>
</dbReference>
<dbReference type="GO" id="GO:0048029">
    <property type="term" value="F:monosaccharide binding"/>
    <property type="evidence" value="ECO:0007669"/>
    <property type="project" value="TreeGrafter"/>
</dbReference>
<dbReference type="GO" id="GO:0061621">
    <property type="term" value="P:canonical glycolysis"/>
    <property type="evidence" value="ECO:0007669"/>
    <property type="project" value="TreeGrafter"/>
</dbReference>
<dbReference type="GO" id="GO:0030388">
    <property type="term" value="P:fructose 1,6-bisphosphate metabolic process"/>
    <property type="evidence" value="ECO:0007669"/>
    <property type="project" value="TreeGrafter"/>
</dbReference>
<dbReference type="GO" id="GO:0006002">
    <property type="term" value="P:fructose 6-phosphate metabolic process"/>
    <property type="evidence" value="ECO:0007669"/>
    <property type="project" value="InterPro"/>
</dbReference>
<dbReference type="FunFam" id="3.40.50.450:FF:000001">
    <property type="entry name" value="ATP-dependent 6-phosphofructokinase"/>
    <property type="match status" value="1"/>
</dbReference>
<dbReference type="FunFam" id="3.40.50.460:FF:000002">
    <property type="entry name" value="ATP-dependent 6-phosphofructokinase"/>
    <property type="match status" value="1"/>
</dbReference>
<dbReference type="Gene3D" id="3.40.50.450">
    <property type="match status" value="1"/>
</dbReference>
<dbReference type="Gene3D" id="3.40.50.460">
    <property type="entry name" value="Phosphofructokinase domain"/>
    <property type="match status" value="1"/>
</dbReference>
<dbReference type="HAMAP" id="MF_00339">
    <property type="entry name" value="Phosphofructokinase_I_B1"/>
    <property type="match status" value="1"/>
</dbReference>
<dbReference type="InterPro" id="IPR022953">
    <property type="entry name" value="ATP_PFK"/>
</dbReference>
<dbReference type="InterPro" id="IPR012003">
    <property type="entry name" value="ATP_PFK_prok-type"/>
</dbReference>
<dbReference type="InterPro" id="IPR012828">
    <property type="entry name" value="PFKA_ATP_prok"/>
</dbReference>
<dbReference type="InterPro" id="IPR015912">
    <property type="entry name" value="Phosphofructokinase_CS"/>
</dbReference>
<dbReference type="InterPro" id="IPR000023">
    <property type="entry name" value="Phosphofructokinase_dom"/>
</dbReference>
<dbReference type="InterPro" id="IPR035966">
    <property type="entry name" value="PKF_sf"/>
</dbReference>
<dbReference type="NCBIfam" id="TIGR02482">
    <property type="entry name" value="PFKA_ATP"/>
    <property type="match status" value="1"/>
</dbReference>
<dbReference type="NCBIfam" id="NF002872">
    <property type="entry name" value="PRK03202.1"/>
    <property type="match status" value="1"/>
</dbReference>
<dbReference type="PANTHER" id="PTHR13697:SF4">
    <property type="entry name" value="ATP-DEPENDENT 6-PHOSPHOFRUCTOKINASE"/>
    <property type="match status" value="1"/>
</dbReference>
<dbReference type="PANTHER" id="PTHR13697">
    <property type="entry name" value="PHOSPHOFRUCTOKINASE"/>
    <property type="match status" value="1"/>
</dbReference>
<dbReference type="Pfam" id="PF00365">
    <property type="entry name" value="PFK"/>
    <property type="match status" value="1"/>
</dbReference>
<dbReference type="PIRSF" id="PIRSF000532">
    <property type="entry name" value="ATP_PFK_prok"/>
    <property type="match status" value="1"/>
</dbReference>
<dbReference type="PRINTS" id="PR00476">
    <property type="entry name" value="PHFRCTKINASE"/>
</dbReference>
<dbReference type="SUPFAM" id="SSF53784">
    <property type="entry name" value="Phosphofructokinase"/>
    <property type="match status" value="1"/>
</dbReference>
<dbReference type="PROSITE" id="PS00433">
    <property type="entry name" value="PHOSPHOFRUCTOKINASE"/>
    <property type="match status" value="1"/>
</dbReference>
<proteinExistence type="inferred from homology"/>
<organism>
    <name type="scientific">Clostridioides difficile (strain 630)</name>
    <name type="common">Peptoclostridium difficile</name>
    <dbReference type="NCBI Taxonomy" id="272563"/>
    <lineage>
        <taxon>Bacteria</taxon>
        <taxon>Bacillati</taxon>
        <taxon>Bacillota</taxon>
        <taxon>Clostridia</taxon>
        <taxon>Peptostreptococcales</taxon>
        <taxon>Peptostreptococcaceae</taxon>
        <taxon>Clostridioides</taxon>
    </lineage>
</organism>
<evidence type="ECO:0000255" key="1">
    <source>
        <dbReference type="HAMAP-Rule" id="MF_00339"/>
    </source>
</evidence>
<comment type="function">
    <text evidence="1">Catalyzes the phosphorylation of D-fructose 6-phosphate to fructose 1,6-bisphosphate by ATP, the first committing step of glycolysis.</text>
</comment>
<comment type="catalytic activity">
    <reaction evidence="1">
        <text>beta-D-fructose 6-phosphate + ATP = beta-D-fructose 1,6-bisphosphate + ADP + H(+)</text>
        <dbReference type="Rhea" id="RHEA:16109"/>
        <dbReference type="ChEBI" id="CHEBI:15378"/>
        <dbReference type="ChEBI" id="CHEBI:30616"/>
        <dbReference type="ChEBI" id="CHEBI:32966"/>
        <dbReference type="ChEBI" id="CHEBI:57634"/>
        <dbReference type="ChEBI" id="CHEBI:456216"/>
        <dbReference type="EC" id="2.7.1.11"/>
    </reaction>
</comment>
<comment type="cofactor">
    <cofactor evidence="1">
        <name>Mg(2+)</name>
        <dbReference type="ChEBI" id="CHEBI:18420"/>
    </cofactor>
</comment>
<comment type="activity regulation">
    <text evidence="1">Allosterically activated by ADP and other diphosphonucleosides, and allosterically inhibited by phosphoenolpyruvate.</text>
</comment>
<comment type="pathway">
    <text evidence="1">Carbohydrate degradation; glycolysis; D-glyceraldehyde 3-phosphate and glycerone phosphate from D-glucose: step 3/4.</text>
</comment>
<comment type="subunit">
    <text evidence="1">Homotetramer.</text>
</comment>
<comment type="subcellular location">
    <subcellularLocation>
        <location evidence="1">Cytoplasm</location>
    </subcellularLocation>
</comment>
<comment type="similarity">
    <text evidence="1">Belongs to the phosphofructokinase type A (PFKA) family. ATP-dependent PFK group I subfamily. Prokaryotic clade 'B1' sub-subfamily.</text>
</comment>